<name>Y354_METJA</name>
<proteinExistence type="predicted"/>
<protein>
    <recommendedName>
        <fullName>Uncharacterized protein MJ0354</fullName>
    </recommendedName>
</protein>
<reference key="1">
    <citation type="journal article" date="1996" name="Science">
        <title>Complete genome sequence of the methanogenic archaeon, Methanococcus jannaschii.</title>
        <authorList>
            <person name="Bult C.J."/>
            <person name="White O."/>
            <person name="Olsen G.J."/>
            <person name="Zhou L."/>
            <person name="Fleischmann R.D."/>
            <person name="Sutton G.G."/>
            <person name="Blake J.A."/>
            <person name="FitzGerald L.M."/>
            <person name="Clayton R.A."/>
            <person name="Gocayne J.D."/>
            <person name="Kerlavage A.R."/>
            <person name="Dougherty B.A."/>
            <person name="Tomb J.-F."/>
            <person name="Adams M.D."/>
            <person name="Reich C.I."/>
            <person name="Overbeek R."/>
            <person name="Kirkness E.F."/>
            <person name="Weinstock K.G."/>
            <person name="Merrick J.M."/>
            <person name="Glodek A."/>
            <person name="Scott J.L."/>
            <person name="Geoghagen N.S.M."/>
            <person name="Weidman J.F."/>
            <person name="Fuhrmann J.L."/>
            <person name="Nguyen D."/>
            <person name="Utterback T.R."/>
            <person name="Kelley J.M."/>
            <person name="Peterson J.D."/>
            <person name="Sadow P.W."/>
            <person name="Hanna M.C."/>
            <person name="Cotton M.D."/>
            <person name="Roberts K.M."/>
            <person name="Hurst M.A."/>
            <person name="Kaine B.P."/>
            <person name="Borodovsky M."/>
            <person name="Klenk H.-P."/>
            <person name="Fraser C.M."/>
            <person name="Smith H.O."/>
            <person name="Woese C.R."/>
            <person name="Venter J.C."/>
        </authorList>
    </citation>
    <scope>NUCLEOTIDE SEQUENCE [LARGE SCALE GENOMIC DNA]</scope>
    <source>
        <strain>ATCC 43067 / DSM 2661 / JAL-1 / JCM 10045 / NBRC 100440</strain>
    </source>
</reference>
<gene>
    <name type="ordered locus">MJ0354</name>
</gene>
<dbReference type="EMBL" id="L77117">
    <property type="protein sequence ID" value="AAB98343.1"/>
    <property type="molecule type" value="Genomic_DNA"/>
</dbReference>
<dbReference type="PIR" id="B64344">
    <property type="entry name" value="B64344"/>
</dbReference>
<dbReference type="RefSeq" id="WP_010869853.1">
    <property type="nucleotide sequence ID" value="NC_000909.1"/>
</dbReference>
<dbReference type="SMR" id="Q57800"/>
<dbReference type="STRING" id="243232.MJ_0354"/>
<dbReference type="PaxDb" id="243232-MJ_0354"/>
<dbReference type="EnsemblBacteria" id="AAB98343">
    <property type="protein sequence ID" value="AAB98343"/>
    <property type="gene ID" value="MJ_0354"/>
</dbReference>
<dbReference type="GeneID" id="43965128"/>
<dbReference type="KEGG" id="mja:MJ_0354"/>
<dbReference type="eggNOG" id="arCOG09666">
    <property type="taxonomic scope" value="Archaea"/>
</dbReference>
<dbReference type="HOGENOM" id="CLU_2968474_0_0_2"/>
<dbReference type="InParanoid" id="Q57800"/>
<dbReference type="OrthoDB" id="373164at2157"/>
<dbReference type="Proteomes" id="UP000000805">
    <property type="component" value="Chromosome"/>
</dbReference>
<keyword id="KW-1185">Reference proteome</keyword>
<organism>
    <name type="scientific">Methanocaldococcus jannaschii (strain ATCC 43067 / DSM 2661 / JAL-1 / JCM 10045 / NBRC 100440)</name>
    <name type="common">Methanococcus jannaschii</name>
    <dbReference type="NCBI Taxonomy" id="243232"/>
    <lineage>
        <taxon>Archaea</taxon>
        <taxon>Methanobacteriati</taxon>
        <taxon>Methanobacteriota</taxon>
        <taxon>Methanomada group</taxon>
        <taxon>Methanococci</taxon>
        <taxon>Methanococcales</taxon>
        <taxon>Methanocaldococcaceae</taxon>
        <taxon>Methanocaldococcus</taxon>
    </lineage>
</organism>
<feature type="chain" id="PRO_0000106825" description="Uncharacterized protein MJ0354">
    <location>
        <begin position="1"/>
        <end position="58"/>
    </location>
</feature>
<sequence>MQINKAIELLERAWSDYNNGDTVGAILKLEEAEDLIRKLRVRLCSEIRREGYDAIFIK</sequence>
<accession>Q57800</accession>